<sequence length="569" mass="65133">MSKFFTNFFVSAKGIFKKASTVQKIALGLIIFFVILALVFLIGFSTKSQSIALFGVEIKDQYLLDRISQRLDRENVKYFLSSDGRIYLDDEKLAKKMRAILVREELVPVHMDPWALFDIDRWTITDFERSINLRRSITRAVEQHIVALDDVDAVSVNLVMPEKALFKESQEPVKASVRITPRPGSDIITNRKKVEGLVKLIQYAIEGLESDNIAIVDNSGTILNDFSNLDGIDRIDLAEKERKLKLKYEAMLRGEIDSALSKVLSVDRFMIARVNVKLDTSKETTESKEYAPIELQSQDPKASYNTRKVSDSTIISSQTQKKEYQGQGYSPWGPPGQEGNTPPEYQDLSDITGKYNESQEIKNVALNEKKSTSEKEPARIVGVSLGIFVDGIWNFVYDEKGDFVIENGMRKREYKPMALEEIKNIEDVLQSSFEYKPERGDSITVRNISFDRMNEFREIDENYFASERFKYFLFIASIVFSLLILVFTIFFAISRELERRRRLREEELAKQAHLRRQQALMDGGDDIGVDDVVGGIREGDELQSNAELLAREKPEDVAKLIRTWLLKNA</sequence>
<comment type="function">
    <text evidence="1">The M ring may be actively involved in energy transduction.</text>
</comment>
<comment type="subunit">
    <text evidence="1">The basal body constitutes a major portion of the flagellar organelle and consists of five rings (E,L,P,S, and M) mounted on a central rod. The M ring is integral to the inner membrane of the cell and may be connected to the flagellar rod via the S ring. The S (supramembrane ring) lies just distal to the M ring. The L and P rings lie in the outer membrane and the periplasmic space, respectively (By similarity).</text>
</comment>
<comment type="subcellular location">
    <subcellularLocation>
        <location evidence="1">Cell inner membrane</location>
        <topology evidence="1">Multi-pass membrane protein</topology>
    </subcellularLocation>
    <subcellularLocation>
        <location evidence="1">Bacterial flagellum basal body</location>
    </subcellularLocation>
</comment>
<comment type="similarity">
    <text evidence="4">Belongs to the FliF family.</text>
</comment>
<comment type="sequence caution" evidence="4">
    <conflict type="frameshift">
        <sequence resource="EMBL-CDS" id="AAA87352"/>
    </conflict>
</comment>
<gene>
    <name type="primary">fliF</name>
    <name type="ordered locus">BB_0291</name>
</gene>
<keyword id="KW-0975">Bacterial flagellum</keyword>
<keyword id="KW-0997">Cell inner membrane</keyword>
<keyword id="KW-1003">Cell membrane</keyword>
<keyword id="KW-0472">Membrane</keyword>
<keyword id="KW-1185">Reference proteome</keyword>
<keyword id="KW-0812">Transmembrane</keyword>
<keyword id="KW-1133">Transmembrane helix</keyword>
<reference key="1">
    <citation type="submission" date="1995-12" db="EMBL/GenBank/DDBJ databases">
        <authorList>
            <person name="Dunn J.J."/>
            <person name="Butler-Loffredo L."/>
            <person name="Kieleczawa J."/>
            <person name="Medalle J."/>
            <person name="Luft B.J."/>
        </authorList>
    </citation>
    <scope>NUCLEOTIDE SEQUENCE [GENOMIC DNA]</scope>
    <source>
        <strain>ATCC 35210 / DSM 4680 / CIP 102532 / B31</strain>
    </source>
</reference>
<reference key="2">
    <citation type="journal article" date="1997" name="J. Bacteriol.">
        <title>Molecular characterization of a large Borrelia burgdorferi motility operon which is initiated by a consensus sigma70 promoter.</title>
        <authorList>
            <person name="Ge Y."/>
            <person name="Old I.G."/>
            <person name="Saint Girons I."/>
            <person name="Charon N.W."/>
        </authorList>
    </citation>
    <scope>NUCLEOTIDE SEQUENCE [GENOMIC DNA]</scope>
</reference>
<reference key="3">
    <citation type="submission" date="1996-02" db="EMBL/GenBank/DDBJ databases">
        <title>Identification of a major motility operon in B. burgdorferi.</title>
        <authorList>
            <person name="Ge Y."/>
            <person name="Saint-Girons I."/>
            <person name="Old I.G."/>
            <person name="Yelton D.B."/>
            <person name="Charon N.W."/>
        </authorList>
    </citation>
    <scope>NUCLEOTIDE SEQUENCE [GENOMIC DNA]</scope>
    <source>
        <strain>212</strain>
    </source>
</reference>
<reference key="4">
    <citation type="journal article" date="1997" name="Nature">
        <title>Genomic sequence of a Lyme disease spirochaete, Borrelia burgdorferi.</title>
        <authorList>
            <person name="Fraser C.M."/>
            <person name="Casjens S."/>
            <person name="Huang W.M."/>
            <person name="Sutton G.G."/>
            <person name="Clayton R.A."/>
            <person name="Lathigra R."/>
            <person name="White O."/>
            <person name="Ketchum K.A."/>
            <person name="Dodson R.J."/>
            <person name="Hickey E.K."/>
            <person name="Gwinn M.L."/>
            <person name="Dougherty B.A."/>
            <person name="Tomb J.-F."/>
            <person name="Fleischmann R.D."/>
            <person name="Richardson D.L."/>
            <person name="Peterson J.D."/>
            <person name="Kerlavage A.R."/>
            <person name="Quackenbush J."/>
            <person name="Salzberg S.L."/>
            <person name="Hanson M."/>
            <person name="van Vugt R."/>
            <person name="Palmer N."/>
            <person name="Adams M.D."/>
            <person name="Gocayne J.D."/>
            <person name="Weidman J.F."/>
            <person name="Utterback T.R."/>
            <person name="Watthey L."/>
            <person name="McDonald L.A."/>
            <person name="Artiach P."/>
            <person name="Bowman C."/>
            <person name="Garland S.A."/>
            <person name="Fujii C."/>
            <person name="Cotton M.D."/>
            <person name="Horst K."/>
            <person name="Roberts K.M."/>
            <person name="Hatch B."/>
            <person name="Smith H.O."/>
            <person name="Venter J.C."/>
        </authorList>
    </citation>
    <scope>NUCLEOTIDE SEQUENCE [LARGE SCALE GENOMIC DNA]</scope>
    <source>
        <strain>ATCC 35210 / DSM 4680 / CIP 102532 / B31</strain>
    </source>
</reference>
<organism>
    <name type="scientific">Borreliella burgdorferi (strain ATCC 35210 / DSM 4680 / CIP 102532 / B31)</name>
    <name type="common">Borrelia burgdorferi</name>
    <dbReference type="NCBI Taxonomy" id="224326"/>
    <lineage>
        <taxon>Bacteria</taxon>
        <taxon>Pseudomonadati</taxon>
        <taxon>Spirochaetota</taxon>
        <taxon>Spirochaetia</taxon>
        <taxon>Spirochaetales</taxon>
        <taxon>Borreliaceae</taxon>
        <taxon>Borreliella</taxon>
    </lineage>
</organism>
<proteinExistence type="inferred from homology"/>
<protein>
    <recommendedName>
        <fullName>Flagellar M-ring protein</fullName>
    </recommendedName>
</protein>
<dbReference type="EMBL" id="U43739">
    <property type="protein sequence ID" value="AAA85614.1"/>
    <property type="molecule type" value="Genomic_DNA"/>
</dbReference>
<dbReference type="EMBL" id="L76303">
    <property type="protein sequence ID" value="AAB51410.1"/>
    <property type="molecule type" value="Genomic_DNA"/>
</dbReference>
<dbReference type="EMBL" id="L40501">
    <property type="protein sequence ID" value="AAA87352.1"/>
    <property type="status" value="ALT_FRAME"/>
    <property type="molecule type" value="Genomic_DNA"/>
</dbReference>
<dbReference type="EMBL" id="AE000783">
    <property type="protein sequence ID" value="AAC66657.1"/>
    <property type="molecule type" value="Genomic_DNA"/>
</dbReference>
<dbReference type="PIR" id="C70136">
    <property type="entry name" value="C70136"/>
</dbReference>
<dbReference type="RefSeq" id="NP_212425.1">
    <property type="nucleotide sequence ID" value="NC_001318.1"/>
</dbReference>
<dbReference type="RefSeq" id="WP_002556890.1">
    <property type="nucleotide sequence ID" value="NC_001318.1"/>
</dbReference>
<dbReference type="SMR" id="Q44912"/>
<dbReference type="STRING" id="224326.BB_0291"/>
<dbReference type="PaxDb" id="224326-BB_0291"/>
<dbReference type="EnsemblBacteria" id="AAC66657">
    <property type="protein sequence ID" value="AAC66657"/>
    <property type="gene ID" value="BB_0291"/>
</dbReference>
<dbReference type="GeneID" id="56567722"/>
<dbReference type="KEGG" id="bbu:BB_0291"/>
<dbReference type="PATRIC" id="fig|224326.49.peg.690"/>
<dbReference type="HOGENOM" id="CLU_028108_2_0_12"/>
<dbReference type="OrthoDB" id="304821at2"/>
<dbReference type="Proteomes" id="UP000001807">
    <property type="component" value="Chromosome"/>
</dbReference>
<dbReference type="GO" id="GO:0009431">
    <property type="term" value="C:bacterial-type flagellum basal body, MS ring"/>
    <property type="evidence" value="ECO:0007669"/>
    <property type="project" value="InterPro"/>
</dbReference>
<dbReference type="GO" id="GO:0005886">
    <property type="term" value="C:plasma membrane"/>
    <property type="evidence" value="ECO:0007669"/>
    <property type="project" value="UniProtKB-SubCell"/>
</dbReference>
<dbReference type="GO" id="GO:0003774">
    <property type="term" value="F:cytoskeletal motor activity"/>
    <property type="evidence" value="ECO:0007669"/>
    <property type="project" value="InterPro"/>
</dbReference>
<dbReference type="GO" id="GO:0071973">
    <property type="term" value="P:bacterial-type flagellum-dependent cell motility"/>
    <property type="evidence" value="ECO:0007669"/>
    <property type="project" value="InterPro"/>
</dbReference>
<dbReference type="Gene3D" id="3.30.300.30">
    <property type="match status" value="1"/>
</dbReference>
<dbReference type="InterPro" id="IPR045851">
    <property type="entry name" value="AMP-bd_C_sf"/>
</dbReference>
<dbReference type="InterPro" id="IPR013556">
    <property type="entry name" value="Flag_M-ring_C"/>
</dbReference>
<dbReference type="InterPro" id="IPR000067">
    <property type="entry name" value="FlgMring_FliF"/>
</dbReference>
<dbReference type="InterPro" id="IPR006182">
    <property type="entry name" value="FliF_N_dom"/>
</dbReference>
<dbReference type="InterPro" id="IPR043427">
    <property type="entry name" value="YscJ/FliF"/>
</dbReference>
<dbReference type="NCBIfam" id="TIGR00206">
    <property type="entry name" value="fliF"/>
    <property type="match status" value="1"/>
</dbReference>
<dbReference type="PANTHER" id="PTHR30046">
    <property type="entry name" value="FLAGELLAR M-RING PROTEIN"/>
    <property type="match status" value="1"/>
</dbReference>
<dbReference type="PANTHER" id="PTHR30046:SF0">
    <property type="entry name" value="FLAGELLAR M-RING PROTEIN"/>
    <property type="match status" value="1"/>
</dbReference>
<dbReference type="Pfam" id="PF01514">
    <property type="entry name" value="YscJ_FliF"/>
    <property type="match status" value="1"/>
</dbReference>
<dbReference type="Pfam" id="PF08345">
    <property type="entry name" value="YscJ_FliF_C"/>
    <property type="match status" value="1"/>
</dbReference>
<dbReference type="PRINTS" id="PR01009">
    <property type="entry name" value="FLGMRINGFLIF"/>
</dbReference>
<evidence type="ECO:0000250" key="1"/>
<evidence type="ECO:0000255" key="2"/>
<evidence type="ECO:0000256" key="3">
    <source>
        <dbReference type="SAM" id="MobiDB-lite"/>
    </source>
</evidence>
<evidence type="ECO:0000305" key="4"/>
<name>FLIF_BORBU</name>
<accession>Q44912</accession>
<accession>Q57338</accession>
<feature type="chain" id="PRO_0000180874" description="Flagellar M-ring protein">
    <location>
        <begin position="1"/>
        <end position="569"/>
    </location>
</feature>
<feature type="transmembrane region" description="Helical" evidence="2">
    <location>
        <begin position="25"/>
        <end position="45"/>
    </location>
</feature>
<feature type="transmembrane region" description="Helical" evidence="2">
    <location>
        <begin position="473"/>
        <end position="493"/>
    </location>
</feature>
<feature type="region of interest" description="Disordered" evidence="3">
    <location>
        <begin position="281"/>
        <end position="348"/>
    </location>
</feature>
<feature type="compositionally biased region" description="Basic and acidic residues" evidence="3">
    <location>
        <begin position="281"/>
        <end position="291"/>
    </location>
</feature>
<feature type="compositionally biased region" description="Polar residues" evidence="3">
    <location>
        <begin position="295"/>
        <end position="319"/>
    </location>
</feature>
<feature type="sequence conflict" description="In Ref. 3; AAA87352." evidence="4" ref="3">
    <original>GSDI</original>
    <variation>LVLIF</variation>
    <location>
        <begin position="184"/>
        <end position="187"/>
    </location>
</feature>
<feature type="sequence conflict" description="In Ref. 3; AAA87352." evidence="4" ref="3">
    <original>YAIEGL</original>
    <variation>PICHEGF</variation>
    <location>
        <begin position="203"/>
        <end position="208"/>
    </location>
</feature>